<feature type="chain" id="PRO_0000290963" description="Small ribosomal subunit protein uS8">
    <location>
        <begin position="1"/>
        <end position="130"/>
    </location>
</feature>
<sequence>MSMQDPIADMLTRIRNGQAANKVAVTMPSSKLKVAIANVLKEEGFIEDFKIEGDTKPVLELALKYFQGKAVVESIQRISRPGLRIYKKKDELPKVMAGLGIAVISTSKGVMTDRAARQAGLGGEIICYVA</sequence>
<proteinExistence type="inferred from homology"/>
<protein>
    <recommendedName>
        <fullName evidence="1">Small ribosomal subunit protein uS8</fullName>
    </recommendedName>
    <alternativeName>
        <fullName evidence="2">30S ribosomal protein S8</fullName>
    </alternativeName>
</protein>
<name>RS8_YERPA</name>
<gene>
    <name evidence="1" type="primary">rpsH</name>
    <name type="ordered locus">YPA_3249</name>
</gene>
<keyword id="KW-0687">Ribonucleoprotein</keyword>
<keyword id="KW-0689">Ribosomal protein</keyword>
<keyword id="KW-0694">RNA-binding</keyword>
<keyword id="KW-0699">rRNA-binding</keyword>
<organism>
    <name type="scientific">Yersinia pestis bv. Antiqua (strain Antiqua)</name>
    <dbReference type="NCBI Taxonomy" id="360102"/>
    <lineage>
        <taxon>Bacteria</taxon>
        <taxon>Pseudomonadati</taxon>
        <taxon>Pseudomonadota</taxon>
        <taxon>Gammaproteobacteria</taxon>
        <taxon>Enterobacterales</taxon>
        <taxon>Yersiniaceae</taxon>
        <taxon>Yersinia</taxon>
    </lineage>
</organism>
<evidence type="ECO:0000255" key="1">
    <source>
        <dbReference type="HAMAP-Rule" id="MF_01302"/>
    </source>
</evidence>
<evidence type="ECO:0000305" key="2"/>
<dbReference type="EMBL" id="CP000308">
    <property type="protein sequence ID" value="ABG15211.1"/>
    <property type="molecule type" value="Genomic_DNA"/>
</dbReference>
<dbReference type="RefSeq" id="WP_002213332.1">
    <property type="nucleotide sequence ID" value="NZ_CP009906.1"/>
</dbReference>
<dbReference type="SMR" id="Q1C2W1"/>
<dbReference type="GeneID" id="96663182"/>
<dbReference type="KEGG" id="ypa:YPA_3249"/>
<dbReference type="Proteomes" id="UP000001971">
    <property type="component" value="Chromosome"/>
</dbReference>
<dbReference type="GO" id="GO:1990904">
    <property type="term" value="C:ribonucleoprotein complex"/>
    <property type="evidence" value="ECO:0007669"/>
    <property type="project" value="UniProtKB-KW"/>
</dbReference>
<dbReference type="GO" id="GO:0005840">
    <property type="term" value="C:ribosome"/>
    <property type="evidence" value="ECO:0007669"/>
    <property type="project" value="UniProtKB-KW"/>
</dbReference>
<dbReference type="GO" id="GO:0019843">
    <property type="term" value="F:rRNA binding"/>
    <property type="evidence" value="ECO:0007669"/>
    <property type="project" value="UniProtKB-UniRule"/>
</dbReference>
<dbReference type="GO" id="GO:0003735">
    <property type="term" value="F:structural constituent of ribosome"/>
    <property type="evidence" value="ECO:0007669"/>
    <property type="project" value="InterPro"/>
</dbReference>
<dbReference type="GO" id="GO:0006412">
    <property type="term" value="P:translation"/>
    <property type="evidence" value="ECO:0007669"/>
    <property type="project" value="UniProtKB-UniRule"/>
</dbReference>
<dbReference type="FunFam" id="3.30.1370.30:FF:000003">
    <property type="entry name" value="30S ribosomal protein S8"/>
    <property type="match status" value="1"/>
</dbReference>
<dbReference type="FunFam" id="3.30.1490.10:FF:000001">
    <property type="entry name" value="30S ribosomal protein S8"/>
    <property type="match status" value="1"/>
</dbReference>
<dbReference type="Gene3D" id="3.30.1370.30">
    <property type="match status" value="1"/>
</dbReference>
<dbReference type="Gene3D" id="3.30.1490.10">
    <property type="match status" value="1"/>
</dbReference>
<dbReference type="HAMAP" id="MF_01302_B">
    <property type="entry name" value="Ribosomal_uS8_B"/>
    <property type="match status" value="1"/>
</dbReference>
<dbReference type="InterPro" id="IPR000630">
    <property type="entry name" value="Ribosomal_uS8"/>
</dbReference>
<dbReference type="InterPro" id="IPR047863">
    <property type="entry name" value="Ribosomal_uS8_CS"/>
</dbReference>
<dbReference type="InterPro" id="IPR035987">
    <property type="entry name" value="Ribosomal_uS8_sf"/>
</dbReference>
<dbReference type="NCBIfam" id="NF001109">
    <property type="entry name" value="PRK00136.1"/>
    <property type="match status" value="1"/>
</dbReference>
<dbReference type="PANTHER" id="PTHR11758">
    <property type="entry name" value="40S RIBOSOMAL PROTEIN S15A"/>
    <property type="match status" value="1"/>
</dbReference>
<dbReference type="Pfam" id="PF00410">
    <property type="entry name" value="Ribosomal_S8"/>
    <property type="match status" value="1"/>
</dbReference>
<dbReference type="SUPFAM" id="SSF56047">
    <property type="entry name" value="Ribosomal protein S8"/>
    <property type="match status" value="1"/>
</dbReference>
<dbReference type="PROSITE" id="PS00053">
    <property type="entry name" value="RIBOSOMAL_S8"/>
    <property type="match status" value="1"/>
</dbReference>
<reference key="1">
    <citation type="journal article" date="2006" name="J. Bacteriol.">
        <title>Complete genome sequence of Yersinia pestis strains Antiqua and Nepal516: evidence of gene reduction in an emerging pathogen.</title>
        <authorList>
            <person name="Chain P.S.G."/>
            <person name="Hu P."/>
            <person name="Malfatti S.A."/>
            <person name="Radnedge L."/>
            <person name="Larimer F."/>
            <person name="Vergez L.M."/>
            <person name="Worsham P."/>
            <person name="Chu M.C."/>
            <person name="Andersen G.L."/>
        </authorList>
    </citation>
    <scope>NUCLEOTIDE SEQUENCE [LARGE SCALE GENOMIC DNA]</scope>
    <source>
        <strain>Antiqua</strain>
    </source>
</reference>
<comment type="function">
    <text evidence="1">One of the primary rRNA binding proteins, it binds directly to 16S rRNA central domain where it helps coordinate assembly of the platform of the 30S subunit.</text>
</comment>
<comment type="subunit">
    <text evidence="1">Part of the 30S ribosomal subunit. Contacts proteins S5 and S12.</text>
</comment>
<comment type="similarity">
    <text evidence="1">Belongs to the universal ribosomal protein uS8 family.</text>
</comment>
<accession>Q1C2W1</accession>